<protein>
    <recommendedName>
        <fullName>Syntaxin-12</fullName>
    </recommendedName>
    <alternativeName>
        <fullName>Syntaxin-13</fullName>
    </alternativeName>
</protein>
<organism>
    <name type="scientific">Rattus norvegicus</name>
    <name type="common">Rat</name>
    <dbReference type="NCBI Taxonomy" id="10116"/>
    <lineage>
        <taxon>Eukaryota</taxon>
        <taxon>Metazoa</taxon>
        <taxon>Chordata</taxon>
        <taxon>Craniata</taxon>
        <taxon>Vertebrata</taxon>
        <taxon>Euteleostomi</taxon>
        <taxon>Mammalia</taxon>
        <taxon>Eutheria</taxon>
        <taxon>Euarchontoglires</taxon>
        <taxon>Glires</taxon>
        <taxon>Rodentia</taxon>
        <taxon>Myomorpha</taxon>
        <taxon>Muroidea</taxon>
        <taxon>Muridae</taxon>
        <taxon>Murinae</taxon>
        <taxon>Rattus</taxon>
    </lineage>
</organism>
<feature type="initiator methionine" description="Removed" evidence="2">
    <location>
        <position position="1"/>
    </location>
</feature>
<feature type="chain" id="PRO_0000415499" description="Syntaxin-12">
    <location>
        <begin position="2"/>
        <end position="274"/>
    </location>
</feature>
<feature type="topological domain" description="Cytoplasmic" evidence="4">
    <location>
        <begin position="2"/>
        <end position="250"/>
    </location>
</feature>
<feature type="transmembrane region" description="Helical; Anchor for type IV membrane protein" evidence="4">
    <location>
        <begin position="251"/>
        <end position="271"/>
    </location>
</feature>
<feature type="topological domain" description="Vesicular" evidence="4">
    <location>
        <begin position="272"/>
        <end position="274"/>
    </location>
</feature>
<feature type="domain" description="t-SNARE coiled-coil homology" evidence="5">
    <location>
        <begin position="178"/>
        <end position="240"/>
    </location>
</feature>
<feature type="region of interest" description="Disordered" evidence="6">
    <location>
        <begin position="1"/>
        <end position="20"/>
    </location>
</feature>
<feature type="region of interest" description="Disordered" evidence="6">
    <location>
        <begin position="128"/>
        <end position="150"/>
    </location>
</feature>
<feature type="coiled-coil region" evidence="4">
    <location>
        <begin position="34"/>
        <end position="80"/>
    </location>
</feature>
<feature type="modified residue" description="N-acetylserine" evidence="2">
    <location>
        <position position="2"/>
    </location>
</feature>
<feature type="modified residue" description="Phosphoserine" evidence="3">
    <location>
        <position position="139"/>
    </location>
</feature>
<feature type="modified residue" description="Phosphoserine" evidence="15">
    <location>
        <position position="142"/>
    </location>
</feature>
<feature type="modified residue" description="Phosphoserine" evidence="3">
    <location>
        <position position="218"/>
    </location>
</feature>
<feature type="modified residue" description="Phosphoserine" evidence="3">
    <location>
        <position position="225"/>
    </location>
</feature>
<feature type="sequence conflict" description="In Ref. 1; AAC23484." evidence="14" ref="1">
    <original>PSGPQP</original>
    <variation>RRSL</variation>
    <location>
        <begin position="14"/>
        <end position="19"/>
    </location>
</feature>
<feature type="sequence conflict" description="In Ref. 2; AAC18967." evidence="14" ref="2">
    <original>PQ</original>
    <variation>LR</variation>
    <location>
        <begin position="17"/>
        <end position="18"/>
    </location>
</feature>
<feature type="sequence conflict" description="In Ref. 1; AAC23484." evidence="14" ref="1">
    <original>N</original>
    <variation>S</variation>
    <location>
        <position position="23"/>
    </location>
</feature>
<feature type="helix" evidence="16">
    <location>
        <begin position="184"/>
        <end position="245"/>
    </location>
</feature>
<comment type="function">
    <text evidence="8 9 11">SNARE promoting fusion of transport vesicles with target membranes (PubMed:17159904, PubMed:30962439). Together with SNARE STX6, promotes movement of vesicles from endosomes to the cell membrane, and may therefore function in the endocytic recycling pathway (PubMed:30962439). Through complex formation with GRIP1, GRIA2 and NSG1 controls the intracellular fate of AMPAR and the endosomal sorting of the GRIA2 subunit toward recycling and membrane targeting (PubMed:16037816).</text>
</comment>
<comment type="subunit">
    <text evidence="1 3 7 8 9 10 12">Associates with the BLOC-1 complex. Interacts with BLOC1S6 (By similarity). Interacts with NAPA and SNAP23 (PubMed:9507000). Identified in a complex containing STX6, STX12, VAMP4 and VTI1A (PubMed:17159904). Interacts with GRIPAP1 (PubMed:20098723). Forms a complex with GRIP1, GRIA2 and NSG1; controls the intracellular fate of AMPAR and the endosomal sorting of the GRIA2 subunit toward recycling and membrane targeting (PubMed:16037816). Interacts with NSG1 (PubMed:12070131). Interacts with TPC1 (By similarity). Interacts (via N-terminus) with VPS13B (PubMed:30962439).</text>
</comment>
<comment type="interaction">
    <interactant intactId="EBI-915654">
        <id>G3V7P1</id>
    </interactant>
    <interactant intactId="EBI-2029956">
        <id>Q63666</id>
        <label>Vamp1</label>
    </interactant>
    <organismsDiffer>false</organismsDiffer>
    <experiments>3</experiments>
</comment>
<comment type="subcellular location">
    <subcellularLocation>
        <location>Endosome membrane</location>
        <topology evidence="13">Single-pass type IV membrane protein</topology>
    </subcellularLocation>
    <subcellularLocation>
        <location>Golgi apparatus membrane</location>
        <topology evidence="13">Single-pass type IV membrane protein</topology>
    </subcellularLocation>
    <subcellularLocation>
        <location evidence="14">Endomembrane system</location>
        <topology evidence="14">Single-pass type IV membrane protein</topology>
        <orientation evidence="14">Cytoplasmic side</orientation>
    </subcellularLocation>
    <subcellularLocation>
        <location evidence="10">Early endosome membrane</location>
        <topology evidence="14">Single-pass type IV membrane protein</topology>
    </subcellularLocation>
    <subcellularLocation>
        <location evidence="10 11 13">Recycling endosome membrane</location>
        <topology evidence="14">Single-pass type IV membrane protein</topology>
    </subcellularLocation>
</comment>
<comment type="tissue specificity">
    <text evidence="12 13">Ubiquitous. Highly expressed in brain.</text>
</comment>
<comment type="similarity">
    <text evidence="14">Belongs to the syntaxin family.</text>
</comment>
<comment type="sequence caution" evidence="14">
    <conflict type="frameshift">
        <sequence resource="EMBL-CDS" id="AAC18967"/>
    </conflict>
</comment>
<proteinExistence type="evidence at protein level"/>
<sequence>MSYGPLDMYRNPGPSGPQPRDFNSIIQTCSGNIQRISQATAQIKNLMSQLGTKQDSSKLQENLQQFQHSTNQLAKETNELLKELGSLPLPLSASEQRQQKLQKERLMNDFSSALNNFQVVQRKVSEKEKESIARARAGSRLSAEDRQREEQLVSFDSHEEWNQMQSQEEEAAITEQDLELIKERETAIQQLEADILDVNQIFKDLAMMIHDQGDLIDSIEANVESSEVHVERASDQLQRAAYYQKKSRKKMCILVLVLSVIVTVLVVVIWVASK</sequence>
<gene>
    <name type="primary">Stx12</name>
    <name type="synonym">Stx13</name>
</gene>
<reference key="1">
    <citation type="journal article" date="1998" name="J. Biol. Chem.">
        <title>Syntaxin 12, a member of the syntaxin family localized to the endosome.</title>
        <authorList>
            <person name="Tang B.L."/>
            <person name="Tan A.E."/>
            <person name="Lim L.K."/>
            <person name="Lee S.S."/>
            <person name="Low D.Y."/>
            <person name="Hong W."/>
        </authorList>
    </citation>
    <scope>NUCLEOTIDE SEQUENCE [MRNA]</scope>
    <scope>INTERACTION WITH NAPA AND SNAP23</scope>
    <scope>SUBCELLULAR LOCATION</scope>
    <scope>TISSUE SPECIFICITY</scope>
</reference>
<reference key="2">
    <citation type="journal article" date="1998" name="J. Biol. Chem.">
        <title>Seven novel mammalian SNARE proteins localize to distinct membrane compartments.</title>
        <authorList>
            <person name="Advani R.J."/>
            <person name="Bae H.-R."/>
            <person name="Bock J.B."/>
            <person name="Chao D.S."/>
            <person name="Doung Y.-C."/>
            <person name="Prekeris R."/>
            <person name="Yoo J.-S."/>
            <person name="Scheller R.H."/>
        </authorList>
    </citation>
    <scope>NUCLEOTIDE SEQUENCE [MRNA]</scope>
    <scope>SUBCELLULAR LOCATION</scope>
    <scope>TISSUE SPECIFICITY</scope>
</reference>
<reference key="3">
    <citation type="journal article" date="2004" name="Nature">
        <title>Genome sequence of the Brown Norway rat yields insights into mammalian evolution.</title>
        <authorList>
            <person name="Gibbs R.A."/>
            <person name="Weinstock G.M."/>
            <person name="Metzker M.L."/>
            <person name="Muzny D.M."/>
            <person name="Sodergren E.J."/>
            <person name="Scherer S."/>
            <person name="Scott G."/>
            <person name="Steffen D."/>
            <person name="Worley K.C."/>
            <person name="Burch P.E."/>
            <person name="Okwuonu G."/>
            <person name="Hines S."/>
            <person name="Lewis L."/>
            <person name="Deramo C."/>
            <person name="Delgado O."/>
            <person name="Dugan-Rocha S."/>
            <person name="Miner G."/>
            <person name="Morgan M."/>
            <person name="Hawes A."/>
            <person name="Gill R."/>
            <person name="Holt R.A."/>
            <person name="Adams M.D."/>
            <person name="Amanatides P.G."/>
            <person name="Baden-Tillson H."/>
            <person name="Barnstead M."/>
            <person name="Chin S."/>
            <person name="Evans C.A."/>
            <person name="Ferriera S."/>
            <person name="Fosler C."/>
            <person name="Glodek A."/>
            <person name="Gu Z."/>
            <person name="Jennings D."/>
            <person name="Kraft C.L."/>
            <person name="Nguyen T."/>
            <person name="Pfannkoch C.M."/>
            <person name="Sitter C."/>
            <person name="Sutton G.G."/>
            <person name="Venter J.C."/>
            <person name="Woodage T."/>
            <person name="Smith D."/>
            <person name="Lee H.-M."/>
            <person name="Gustafson E."/>
            <person name="Cahill P."/>
            <person name="Kana A."/>
            <person name="Doucette-Stamm L."/>
            <person name="Weinstock K."/>
            <person name="Fechtel K."/>
            <person name="Weiss R.B."/>
            <person name="Dunn D.M."/>
            <person name="Green E.D."/>
            <person name="Blakesley R.W."/>
            <person name="Bouffard G.G."/>
            <person name="De Jong P.J."/>
            <person name="Osoegawa K."/>
            <person name="Zhu B."/>
            <person name="Marra M."/>
            <person name="Schein J."/>
            <person name="Bosdet I."/>
            <person name="Fjell C."/>
            <person name="Jones S."/>
            <person name="Krzywinski M."/>
            <person name="Mathewson C."/>
            <person name="Siddiqui A."/>
            <person name="Wye N."/>
            <person name="McPherson J."/>
            <person name="Zhao S."/>
            <person name="Fraser C.M."/>
            <person name="Shetty J."/>
            <person name="Shatsman S."/>
            <person name="Geer K."/>
            <person name="Chen Y."/>
            <person name="Abramzon S."/>
            <person name="Nierman W.C."/>
            <person name="Havlak P.H."/>
            <person name="Chen R."/>
            <person name="Durbin K.J."/>
            <person name="Egan A."/>
            <person name="Ren Y."/>
            <person name="Song X.-Z."/>
            <person name="Li B."/>
            <person name="Liu Y."/>
            <person name="Qin X."/>
            <person name="Cawley S."/>
            <person name="Cooney A.J."/>
            <person name="D'Souza L.M."/>
            <person name="Martin K."/>
            <person name="Wu J.Q."/>
            <person name="Gonzalez-Garay M.L."/>
            <person name="Jackson A.R."/>
            <person name="Kalafus K.J."/>
            <person name="McLeod M.P."/>
            <person name="Milosavljevic A."/>
            <person name="Virk D."/>
            <person name="Volkov A."/>
            <person name="Wheeler D.A."/>
            <person name="Zhang Z."/>
            <person name="Bailey J.A."/>
            <person name="Eichler E.E."/>
            <person name="Tuzun E."/>
            <person name="Birney E."/>
            <person name="Mongin E."/>
            <person name="Ureta-Vidal A."/>
            <person name="Woodwark C."/>
            <person name="Zdobnov E."/>
            <person name="Bork P."/>
            <person name="Suyama M."/>
            <person name="Torrents D."/>
            <person name="Alexandersson M."/>
            <person name="Trask B.J."/>
            <person name="Young J.M."/>
            <person name="Huang H."/>
            <person name="Wang H."/>
            <person name="Xing H."/>
            <person name="Daniels S."/>
            <person name="Gietzen D."/>
            <person name="Schmidt J."/>
            <person name="Stevens K."/>
            <person name="Vitt U."/>
            <person name="Wingrove J."/>
            <person name="Camara F."/>
            <person name="Mar Alba M."/>
            <person name="Abril J.F."/>
            <person name="Guigo R."/>
            <person name="Smit A."/>
            <person name="Dubchak I."/>
            <person name="Rubin E.M."/>
            <person name="Couronne O."/>
            <person name="Poliakov A."/>
            <person name="Huebner N."/>
            <person name="Ganten D."/>
            <person name="Goesele C."/>
            <person name="Hummel O."/>
            <person name="Kreitler T."/>
            <person name="Lee Y.-A."/>
            <person name="Monti J."/>
            <person name="Schulz H."/>
            <person name="Zimdahl H."/>
            <person name="Himmelbauer H."/>
            <person name="Lehrach H."/>
            <person name="Jacob H.J."/>
            <person name="Bromberg S."/>
            <person name="Gullings-Handley J."/>
            <person name="Jensen-Seaman M.I."/>
            <person name="Kwitek A.E."/>
            <person name="Lazar J."/>
            <person name="Pasko D."/>
            <person name="Tonellato P.J."/>
            <person name="Twigger S."/>
            <person name="Ponting C.P."/>
            <person name="Duarte J.M."/>
            <person name="Rice S."/>
            <person name="Goodstadt L."/>
            <person name="Beatson S.A."/>
            <person name="Emes R.D."/>
            <person name="Winter E.E."/>
            <person name="Webber C."/>
            <person name="Brandt P."/>
            <person name="Nyakatura G."/>
            <person name="Adetobi M."/>
            <person name="Chiaromonte F."/>
            <person name="Elnitski L."/>
            <person name="Eswara P."/>
            <person name="Hardison R.C."/>
            <person name="Hou M."/>
            <person name="Kolbe D."/>
            <person name="Makova K."/>
            <person name="Miller W."/>
            <person name="Nekrutenko A."/>
            <person name="Riemer C."/>
            <person name="Schwartz S."/>
            <person name="Taylor J."/>
            <person name="Yang S."/>
            <person name="Zhang Y."/>
            <person name="Lindpaintner K."/>
            <person name="Andrews T.D."/>
            <person name="Caccamo M."/>
            <person name="Clamp M."/>
            <person name="Clarke L."/>
            <person name="Curwen V."/>
            <person name="Durbin R.M."/>
            <person name="Eyras E."/>
            <person name="Searle S.M."/>
            <person name="Cooper G.M."/>
            <person name="Batzoglou S."/>
            <person name="Brudno M."/>
            <person name="Sidow A."/>
            <person name="Stone E.A."/>
            <person name="Payseur B.A."/>
            <person name="Bourque G."/>
            <person name="Lopez-Otin C."/>
            <person name="Puente X.S."/>
            <person name="Chakrabarti K."/>
            <person name="Chatterji S."/>
            <person name="Dewey C."/>
            <person name="Pachter L."/>
            <person name="Bray N."/>
            <person name="Yap V.B."/>
            <person name="Caspi A."/>
            <person name="Tesler G."/>
            <person name="Pevzner P.A."/>
            <person name="Haussler D."/>
            <person name="Roskin K.M."/>
            <person name="Baertsch R."/>
            <person name="Clawson H."/>
            <person name="Furey T.S."/>
            <person name="Hinrichs A.S."/>
            <person name="Karolchik D."/>
            <person name="Kent W.J."/>
            <person name="Rosenbloom K.R."/>
            <person name="Trumbower H."/>
            <person name="Weirauch M."/>
            <person name="Cooper D.N."/>
            <person name="Stenson P.D."/>
            <person name="Ma B."/>
            <person name="Brent M."/>
            <person name="Arumugam M."/>
            <person name="Shteynberg D."/>
            <person name="Copley R.R."/>
            <person name="Taylor M.S."/>
            <person name="Riethman H."/>
            <person name="Mudunuri U."/>
            <person name="Peterson J."/>
            <person name="Guyer M."/>
            <person name="Felsenfeld A."/>
            <person name="Old S."/>
            <person name="Mockrin S."/>
            <person name="Collins F.S."/>
        </authorList>
    </citation>
    <scope>NUCLEOTIDE SEQUENCE [LARGE SCALE GENOMIC DNA]</scope>
    <source>
        <strain>Brown Norway</strain>
    </source>
</reference>
<reference key="4">
    <citation type="submission" date="2005-07" db="EMBL/GenBank/DDBJ databases">
        <authorList>
            <person name="Mural R.J."/>
            <person name="Adams M.D."/>
            <person name="Myers E.W."/>
            <person name="Smith H.O."/>
            <person name="Venter J.C."/>
        </authorList>
    </citation>
    <scope>NUCLEOTIDE SEQUENCE [LARGE SCALE GENOMIC DNA]</scope>
    <source>
        <strain>Brown Norway</strain>
    </source>
</reference>
<reference key="5">
    <citation type="journal article" date="2002" name="J. Cell Biol.">
        <title>Modulation of receptor cycling by neuron-enriched endosomal protein of 21 kD.</title>
        <authorList>
            <person name="Steiner P."/>
            <person name="Sarria J.C."/>
            <person name="Glauser L."/>
            <person name="Magnin S."/>
            <person name="Catsicas S."/>
            <person name="Hirling H."/>
        </authorList>
    </citation>
    <scope>INTERACTION WITH NSG1</scope>
</reference>
<reference key="6">
    <citation type="journal article" date="2005" name="EMBO J.">
        <title>Interactions between NEEP21, GRIP1 and GluR2 regulate sorting and recycling of the glutamate receptor subunit GluR2.</title>
        <authorList>
            <person name="Steiner P."/>
            <person name="Alberi S."/>
            <person name="Kulangara K."/>
            <person name="Yersin A."/>
            <person name="Sarria J.C."/>
            <person name="Regulier E."/>
            <person name="Kasas S."/>
            <person name="Dietler G."/>
            <person name="Muller D."/>
            <person name="Catsicas S."/>
            <person name="Hirling H."/>
        </authorList>
    </citation>
    <scope>FUNCTION</scope>
    <scope>COMPLEX FORMATION WITH GRIP1; GRIA2 AND NSG1</scope>
</reference>
<reference key="7">
    <citation type="journal article" date="2010" name="PLoS Biol.">
        <title>Neuron specific Rab4 effector GRASP-1 coordinates membrane specialization and maturation of recycling endosomes.</title>
        <authorList>
            <person name="Hoogenraad C.C."/>
            <person name="Popa I."/>
            <person name="Futai K."/>
            <person name="Martinez-Sanchez E."/>
            <person name="Sanchez-Martinez E."/>
            <person name="Wulf P.S."/>
            <person name="van Vlijmen T."/>
            <person name="Dortland B.R."/>
            <person name="Oorschot V."/>
            <person name="Govers R."/>
            <person name="Monti M."/>
            <person name="Heck A.J."/>
            <person name="Sheng M."/>
            <person name="Klumperman J."/>
            <person name="Rehmann H."/>
            <person name="Jaarsma D."/>
            <person name="Kapitein L.C."/>
            <person name="van der Sluijs P."/>
        </authorList>
    </citation>
    <scope>INTERACTION WITH GRIPAP1</scope>
    <scope>SUBCELLULAR LOCATION</scope>
</reference>
<reference key="8">
    <citation type="journal article" date="2012" name="Nat. Commun.">
        <title>Quantitative maps of protein phosphorylation sites across 14 different rat organs and tissues.</title>
        <authorList>
            <person name="Lundby A."/>
            <person name="Secher A."/>
            <person name="Lage K."/>
            <person name="Nordsborg N.B."/>
            <person name="Dmytriyev A."/>
            <person name="Lundby C."/>
            <person name="Olsen J.V."/>
        </authorList>
    </citation>
    <scope>PHOSPHORYLATION [LARGE SCALE ANALYSIS] AT SER-142</scope>
    <scope>IDENTIFICATION BY MASS SPECTROMETRY [LARGE SCALE ANALYSIS]</scope>
</reference>
<reference key="9">
    <citation type="journal article" date="2019" name="Nat. Commun.">
        <title>SNAREs define targeting specificity of trafficking vesicles by combinatorial interaction with tethering factors.</title>
        <authorList>
            <person name="Koike S."/>
            <person name="Jahn R."/>
        </authorList>
    </citation>
    <scope>FUNCTION</scope>
    <scope>INTERACTION WITH VPS13B</scope>
    <scope>SUBCELLULAR LOCATION</scope>
</reference>
<reference key="10">
    <citation type="journal article" date="2007" name="EMBO J.">
        <title>Early endosomal SNAREs form a structurally conserved SNARE complex and fuse liposomes with multiple topologies.</title>
        <authorList>
            <person name="Zwilling D."/>
            <person name="Cypionka A."/>
            <person name="Pohl W.H."/>
            <person name="Fasshauer D."/>
            <person name="Walla P.J."/>
            <person name="Wahl M.C."/>
            <person name="Jahn R."/>
        </authorList>
    </citation>
    <scope>X-RAY CRYSTALLOGRAPHY (2.5 ANGSTROMS) OF 184-251 N COMPLEX WITH STX6; VTI1A AND VAMP4</scope>
    <scope>FUNCTION</scope>
    <scope>SUBUNIT</scope>
</reference>
<name>STX12_RAT</name>
<keyword id="KW-0002">3D-structure</keyword>
<keyword id="KW-0007">Acetylation</keyword>
<keyword id="KW-0175">Coiled coil</keyword>
<keyword id="KW-0967">Endosome</keyword>
<keyword id="KW-0333">Golgi apparatus</keyword>
<keyword id="KW-0472">Membrane</keyword>
<keyword id="KW-0597">Phosphoprotein</keyword>
<keyword id="KW-0653">Protein transport</keyword>
<keyword id="KW-1185">Reference proteome</keyword>
<keyword id="KW-0812">Transmembrane</keyword>
<keyword id="KW-1133">Transmembrane helix</keyword>
<keyword id="KW-0813">Transport</keyword>
<dbReference type="EMBL" id="AF035632">
    <property type="protein sequence ID" value="AAC23484.1"/>
    <property type="molecule type" value="mRNA"/>
</dbReference>
<dbReference type="EMBL" id="AF044581">
    <property type="protein sequence ID" value="AAC18967.1"/>
    <property type="status" value="ALT_FRAME"/>
    <property type="molecule type" value="mRNA"/>
</dbReference>
<dbReference type="EMBL" id="CH473968">
    <property type="protein sequence ID" value="EDL80653.1"/>
    <property type="molecule type" value="Genomic_DNA"/>
</dbReference>
<dbReference type="RefSeq" id="NP_075228.2">
    <property type="nucleotide sequence ID" value="NM_022939.3"/>
</dbReference>
<dbReference type="PDB" id="2NPS">
    <property type="method" value="X-ray"/>
    <property type="resolution" value="2.50 A"/>
    <property type="chains" value="B=184-251"/>
</dbReference>
<dbReference type="PDBsum" id="2NPS"/>
<dbReference type="SMR" id="G3V7P1"/>
<dbReference type="BioGRID" id="249226">
    <property type="interactions" value="4"/>
</dbReference>
<dbReference type="CORUM" id="G3V7P1"/>
<dbReference type="FunCoup" id="G3V7P1">
    <property type="interactions" value="4179"/>
</dbReference>
<dbReference type="IntAct" id="G3V7P1">
    <property type="interactions" value="5"/>
</dbReference>
<dbReference type="MINT" id="G3V7P1"/>
<dbReference type="STRING" id="10116.ENSRNOP00000069420"/>
<dbReference type="iPTMnet" id="G3V7P1"/>
<dbReference type="PhosphoSitePlus" id="G3V7P1"/>
<dbReference type="SwissPalm" id="G3V7P1"/>
<dbReference type="jPOST" id="G3V7P1"/>
<dbReference type="PaxDb" id="10116-ENSRNOP00000017227"/>
<dbReference type="Ensembl" id="ENSRNOT00000017227.5">
    <property type="protein sequence ID" value="ENSRNOP00000017227.2"/>
    <property type="gene ID" value="ENSRNOG00000011804.7"/>
</dbReference>
<dbReference type="GeneID" id="65033"/>
<dbReference type="KEGG" id="rno:65033"/>
<dbReference type="UCSC" id="RGD:620977">
    <property type="organism name" value="rat"/>
</dbReference>
<dbReference type="AGR" id="RGD:620977"/>
<dbReference type="CTD" id="23673"/>
<dbReference type="RGD" id="620977">
    <property type="gene designation" value="Stx12"/>
</dbReference>
<dbReference type="eggNOG" id="KOG0811">
    <property type="taxonomic scope" value="Eukaryota"/>
</dbReference>
<dbReference type="GeneTree" id="ENSGT01000000214440"/>
<dbReference type="InParanoid" id="G3V7P1"/>
<dbReference type="PhylomeDB" id="G3V7P1"/>
<dbReference type="TreeFam" id="TF315607"/>
<dbReference type="EvolutionaryTrace" id="G3V7P1"/>
<dbReference type="PRO" id="PR:G3V7P1"/>
<dbReference type="Proteomes" id="UP000002494">
    <property type="component" value="Chromosome 5"/>
</dbReference>
<dbReference type="Proteomes" id="UP000234681">
    <property type="component" value="Chromosome 5"/>
</dbReference>
<dbReference type="Bgee" id="ENSRNOG00000011804">
    <property type="expression patterns" value="Expressed in stomach and 20 other cell types or tissues"/>
</dbReference>
<dbReference type="ExpressionAtlas" id="G3V7P1">
    <property type="expression patterns" value="baseline and differential"/>
</dbReference>
<dbReference type="GO" id="GO:0031083">
    <property type="term" value="C:BLOC-1 complex"/>
    <property type="evidence" value="ECO:0000266"/>
    <property type="project" value="RGD"/>
</dbReference>
<dbReference type="GO" id="GO:0031901">
    <property type="term" value="C:early endosome membrane"/>
    <property type="evidence" value="ECO:0007669"/>
    <property type="project" value="UniProtKB-SubCell"/>
</dbReference>
<dbReference type="GO" id="GO:0012505">
    <property type="term" value="C:endomembrane system"/>
    <property type="evidence" value="ECO:0000318"/>
    <property type="project" value="GO_Central"/>
</dbReference>
<dbReference type="GO" id="GO:0098978">
    <property type="term" value="C:glutamatergic synapse"/>
    <property type="evidence" value="ECO:0000314"/>
    <property type="project" value="SynGO"/>
</dbReference>
<dbReference type="GO" id="GO:0000139">
    <property type="term" value="C:Golgi membrane"/>
    <property type="evidence" value="ECO:0007669"/>
    <property type="project" value="UniProtKB-SubCell"/>
</dbReference>
<dbReference type="GO" id="GO:0045121">
    <property type="term" value="C:membrane raft"/>
    <property type="evidence" value="ECO:0000266"/>
    <property type="project" value="RGD"/>
</dbReference>
<dbReference type="GO" id="GO:0045335">
    <property type="term" value="C:phagocytic vesicle"/>
    <property type="evidence" value="ECO:0000266"/>
    <property type="project" value="RGD"/>
</dbReference>
<dbReference type="GO" id="GO:0000407">
    <property type="term" value="C:phagophore assembly site"/>
    <property type="evidence" value="ECO:0000266"/>
    <property type="project" value="RGD"/>
</dbReference>
<dbReference type="GO" id="GO:0098837">
    <property type="term" value="C:postsynaptic recycling endosome"/>
    <property type="evidence" value="ECO:0000318"/>
    <property type="project" value="GO_Central"/>
</dbReference>
<dbReference type="GO" id="GO:0098944">
    <property type="term" value="C:postsynaptic recycling endosome membrane"/>
    <property type="evidence" value="ECO:0000314"/>
    <property type="project" value="SynGO"/>
</dbReference>
<dbReference type="GO" id="GO:0055037">
    <property type="term" value="C:recycling endosome"/>
    <property type="evidence" value="ECO:0000314"/>
    <property type="project" value="UniProtKB"/>
</dbReference>
<dbReference type="GO" id="GO:0055038">
    <property type="term" value="C:recycling endosome membrane"/>
    <property type="evidence" value="ECO:0007669"/>
    <property type="project" value="UniProtKB-SubCell"/>
</dbReference>
<dbReference type="GO" id="GO:0031201">
    <property type="term" value="C:SNARE complex"/>
    <property type="evidence" value="ECO:0000250"/>
    <property type="project" value="UniProtKB"/>
</dbReference>
<dbReference type="GO" id="GO:0008021">
    <property type="term" value="C:synaptic vesicle"/>
    <property type="evidence" value="ECO:0000318"/>
    <property type="project" value="GO_Central"/>
</dbReference>
<dbReference type="GO" id="GO:0030672">
    <property type="term" value="C:synaptic vesicle membrane"/>
    <property type="evidence" value="ECO:0000314"/>
    <property type="project" value="SynGO"/>
</dbReference>
<dbReference type="GO" id="GO:0031982">
    <property type="term" value="C:vesicle"/>
    <property type="evidence" value="ECO:0000266"/>
    <property type="project" value="RGD"/>
</dbReference>
<dbReference type="GO" id="GO:0005484">
    <property type="term" value="F:SNAP receptor activity"/>
    <property type="evidence" value="ECO:0000318"/>
    <property type="project" value="GO_Central"/>
</dbReference>
<dbReference type="GO" id="GO:0000149">
    <property type="term" value="F:SNARE binding"/>
    <property type="evidence" value="ECO:0000318"/>
    <property type="project" value="GO_Central"/>
</dbReference>
<dbReference type="GO" id="GO:0000045">
    <property type="term" value="P:autophagosome assembly"/>
    <property type="evidence" value="ECO:0000266"/>
    <property type="project" value="RGD"/>
</dbReference>
<dbReference type="GO" id="GO:0033344">
    <property type="term" value="P:cholesterol efflux"/>
    <property type="evidence" value="ECO:0000266"/>
    <property type="project" value="RGD"/>
</dbReference>
<dbReference type="GO" id="GO:0032456">
    <property type="term" value="P:endocytic recycling"/>
    <property type="evidence" value="ECO:0000314"/>
    <property type="project" value="UniProtKB"/>
</dbReference>
<dbReference type="GO" id="GO:0006886">
    <property type="term" value="P:intracellular protein transport"/>
    <property type="evidence" value="ECO:0000318"/>
    <property type="project" value="GO_Central"/>
</dbReference>
<dbReference type="GO" id="GO:0050821">
    <property type="term" value="P:protein stabilization"/>
    <property type="evidence" value="ECO:0000266"/>
    <property type="project" value="RGD"/>
</dbReference>
<dbReference type="GO" id="GO:0099072">
    <property type="term" value="P:regulation of postsynaptic membrane neurotransmitter receptor levels"/>
    <property type="evidence" value="ECO:0000314"/>
    <property type="project" value="SynGO"/>
</dbReference>
<dbReference type="GO" id="GO:0016189">
    <property type="term" value="P:synaptic vesicle to endosome fusion"/>
    <property type="evidence" value="ECO:0000314"/>
    <property type="project" value="SynGO"/>
</dbReference>
<dbReference type="GO" id="GO:0048278">
    <property type="term" value="P:vesicle docking"/>
    <property type="evidence" value="ECO:0000318"/>
    <property type="project" value="GO_Central"/>
</dbReference>
<dbReference type="GO" id="GO:0006906">
    <property type="term" value="P:vesicle fusion"/>
    <property type="evidence" value="ECO:0000318"/>
    <property type="project" value="GO_Central"/>
</dbReference>
<dbReference type="CDD" id="cd15876">
    <property type="entry name" value="SNARE_syntaxin12"/>
    <property type="match status" value="1"/>
</dbReference>
<dbReference type="CDD" id="cd00179">
    <property type="entry name" value="SynN"/>
    <property type="match status" value="1"/>
</dbReference>
<dbReference type="DisProt" id="DP01501"/>
<dbReference type="FunFam" id="1.20.5.110:FF:000016">
    <property type="entry name" value="Syntaxin 12"/>
    <property type="match status" value="1"/>
</dbReference>
<dbReference type="FunFam" id="1.20.58.70:FF:000009">
    <property type="entry name" value="Syntaxin 12"/>
    <property type="match status" value="1"/>
</dbReference>
<dbReference type="Gene3D" id="1.20.5.110">
    <property type="match status" value="1"/>
</dbReference>
<dbReference type="Gene3D" id="1.20.58.70">
    <property type="match status" value="1"/>
</dbReference>
<dbReference type="InterPro" id="IPR010989">
    <property type="entry name" value="SNARE"/>
</dbReference>
<dbReference type="InterPro" id="IPR045242">
    <property type="entry name" value="Syntaxin"/>
</dbReference>
<dbReference type="InterPro" id="IPR006012">
    <property type="entry name" value="Syntaxin/epimorphin_CS"/>
</dbReference>
<dbReference type="InterPro" id="IPR006011">
    <property type="entry name" value="Syntaxin_N"/>
</dbReference>
<dbReference type="InterPro" id="IPR000727">
    <property type="entry name" value="T_SNARE_dom"/>
</dbReference>
<dbReference type="PANTHER" id="PTHR19957">
    <property type="entry name" value="SYNTAXIN"/>
    <property type="match status" value="1"/>
</dbReference>
<dbReference type="PANTHER" id="PTHR19957:SF88">
    <property type="entry name" value="SYNTAXIN-12"/>
    <property type="match status" value="1"/>
</dbReference>
<dbReference type="Pfam" id="PF05739">
    <property type="entry name" value="SNARE"/>
    <property type="match status" value="1"/>
</dbReference>
<dbReference type="Pfam" id="PF14523">
    <property type="entry name" value="Syntaxin_2"/>
    <property type="match status" value="1"/>
</dbReference>
<dbReference type="SMART" id="SM00503">
    <property type="entry name" value="SynN"/>
    <property type="match status" value="1"/>
</dbReference>
<dbReference type="SMART" id="SM00397">
    <property type="entry name" value="t_SNARE"/>
    <property type="match status" value="1"/>
</dbReference>
<dbReference type="SUPFAM" id="SSF47661">
    <property type="entry name" value="t-snare proteins"/>
    <property type="match status" value="1"/>
</dbReference>
<dbReference type="PROSITE" id="PS00914">
    <property type="entry name" value="SYNTAXIN"/>
    <property type="match status" value="1"/>
</dbReference>
<dbReference type="PROSITE" id="PS50192">
    <property type="entry name" value="T_SNARE"/>
    <property type="match status" value="1"/>
</dbReference>
<accession>G3V7P1</accession>
<accession>O70319</accession>
<accession>O88385</accession>
<evidence type="ECO:0000250" key="1"/>
<evidence type="ECO:0000250" key="2">
    <source>
        <dbReference type="UniProtKB" id="Q86Y82"/>
    </source>
</evidence>
<evidence type="ECO:0000250" key="3">
    <source>
        <dbReference type="UniProtKB" id="Q9ER00"/>
    </source>
</evidence>
<evidence type="ECO:0000255" key="4"/>
<evidence type="ECO:0000255" key="5">
    <source>
        <dbReference type="PROSITE-ProRule" id="PRU00202"/>
    </source>
</evidence>
<evidence type="ECO:0000256" key="6">
    <source>
        <dbReference type="SAM" id="MobiDB-lite"/>
    </source>
</evidence>
<evidence type="ECO:0000269" key="7">
    <source>
    </source>
</evidence>
<evidence type="ECO:0000269" key="8">
    <source>
    </source>
</evidence>
<evidence type="ECO:0000269" key="9">
    <source>
    </source>
</evidence>
<evidence type="ECO:0000269" key="10">
    <source>
    </source>
</evidence>
<evidence type="ECO:0000269" key="11">
    <source>
    </source>
</evidence>
<evidence type="ECO:0000269" key="12">
    <source>
    </source>
</evidence>
<evidence type="ECO:0000269" key="13">
    <source>
    </source>
</evidence>
<evidence type="ECO:0000305" key="14"/>
<evidence type="ECO:0007744" key="15">
    <source>
    </source>
</evidence>
<evidence type="ECO:0007829" key="16">
    <source>
        <dbReference type="PDB" id="2NPS"/>
    </source>
</evidence>